<protein>
    <recommendedName>
        <fullName>Tumor necrosis factor alpha-induced protein 8-like protein 2</fullName>
        <shortName>TIPE2</shortName>
        <shortName>TNF alpha-induced protein 8-like protein 2</shortName>
        <shortName>TNFAIP8-like protein 2</shortName>
    </recommendedName>
</protein>
<dbReference type="EMBL" id="DP000710">
    <property type="protein sequence ID" value="ACC64584.1"/>
    <property type="molecule type" value="Genomic_DNA"/>
</dbReference>
<dbReference type="SMR" id="B2KI57"/>
<dbReference type="FunCoup" id="B2KI57">
    <property type="interactions" value="341"/>
</dbReference>
<dbReference type="InParanoid" id="B2KI57"/>
<dbReference type="Proteomes" id="UP000472240">
    <property type="component" value="Unplaced"/>
</dbReference>
<dbReference type="GO" id="GO:0005764">
    <property type="term" value="C:lysosome"/>
    <property type="evidence" value="ECO:0007669"/>
    <property type="project" value="UniProtKB-SubCell"/>
</dbReference>
<dbReference type="GO" id="GO:0005634">
    <property type="term" value="C:nucleus"/>
    <property type="evidence" value="ECO:0007669"/>
    <property type="project" value="UniProtKB-SubCell"/>
</dbReference>
<dbReference type="GO" id="GO:0045087">
    <property type="term" value="P:innate immune response"/>
    <property type="evidence" value="ECO:0007669"/>
    <property type="project" value="UniProtKB-KW"/>
</dbReference>
<dbReference type="GO" id="GO:0050728">
    <property type="term" value="P:negative regulation of inflammatory response"/>
    <property type="evidence" value="ECO:0007669"/>
    <property type="project" value="TreeGrafter"/>
</dbReference>
<dbReference type="GO" id="GO:0050868">
    <property type="term" value="P:negative regulation of T cell activation"/>
    <property type="evidence" value="ECO:0007669"/>
    <property type="project" value="TreeGrafter"/>
</dbReference>
<dbReference type="GO" id="GO:0042981">
    <property type="term" value="P:regulation of apoptotic process"/>
    <property type="evidence" value="ECO:0007669"/>
    <property type="project" value="InterPro"/>
</dbReference>
<dbReference type="FunFam" id="1.20.1440.160:FF:000001">
    <property type="entry name" value="Tumor necrosis factor alpha-induced protein 8-like 1"/>
    <property type="match status" value="1"/>
</dbReference>
<dbReference type="Gene3D" id="1.20.1440.160">
    <property type="entry name" value="Tumor necrosis factor alpha-induced protein 8-like"/>
    <property type="match status" value="1"/>
</dbReference>
<dbReference type="InterPro" id="IPR008477">
    <property type="entry name" value="TNFAIP8-like"/>
</dbReference>
<dbReference type="InterPro" id="IPR038355">
    <property type="entry name" value="TNFAIP8_sf"/>
</dbReference>
<dbReference type="PANTHER" id="PTHR12757:SF4">
    <property type="entry name" value="TUMOR NECROSIS FACTOR ALPHA-INDUCED PROTEIN 8-LIKE PROTEIN 2"/>
    <property type="match status" value="1"/>
</dbReference>
<dbReference type="PANTHER" id="PTHR12757">
    <property type="entry name" value="TUMOR NECROSIS FACTOR INDUCED PROTEIN"/>
    <property type="match status" value="1"/>
</dbReference>
<dbReference type="Pfam" id="PF05527">
    <property type="entry name" value="DUF758"/>
    <property type="match status" value="1"/>
</dbReference>
<keyword id="KW-0963">Cytoplasm</keyword>
<keyword id="KW-0391">Immunity</keyword>
<keyword id="KW-0399">Innate immunity</keyword>
<keyword id="KW-0458">Lysosome</keyword>
<keyword id="KW-0539">Nucleus</keyword>
<keyword id="KW-1185">Reference proteome</keyword>
<keyword id="KW-0832">Ubl conjugation</keyword>
<sequence length="184" mass="20532">MEPFSSKSLALQAEKKLLSKMAGRSVAHLFIDETSSAVLDELYRVSKEYTHSRPQAQRVIKDLIKVAVKVAVLHRSGCFGPSELALAARFRQKLQQGAMTALSFGEVDFTFEAAVLAGLLTECRDMLLELVEHHLTPKSHNRIRHVFDHFSDPGLLTALYGPDFTQHLGKICDGLRKMLDEGKL</sequence>
<proteinExistence type="inferred from homology"/>
<comment type="function">
    <text evidence="2 3">Acts as a negative regulator of innate and adaptive immunity by maintaining immune homeostasis. Plays a regulatory role in the Toll-like signaling pathway by determining the strength of LPS-induced signaling and gene expression (By similarity). Inhibits TCR-mediated T-cell activation and negatively regulate T-cell function to prevent hyperresponsiveness (By similarity). Also inhibits autolysosome formation via negatively modulating MTOR activation by interacting with RAC1 and promoting the disassociation of the RAC1-MTOR complex (By similarity). Plays an essential role in NK-cell biology by acting as a checkpoint and displaying an expression pattern correlating with NK-cell maturation process and by negatively regulating NK-cell maturation and antitumor immunity (By similarity). Mechanistically, suppresses IL-15-triggered mTOR activity in NK-cells (By similarity).</text>
</comment>
<comment type="subunit">
    <text evidence="2">May interact with CASP8; however, such result is unclear since could not reproduce the interaction with CASP8. Interacts with RAC1.</text>
</comment>
<comment type="subcellular location">
    <subcellularLocation>
        <location evidence="2">Cytoplasm</location>
    </subcellularLocation>
    <subcellularLocation>
        <location evidence="2">Nucleus</location>
    </subcellularLocation>
    <subcellularLocation>
        <location evidence="2">Lysosome</location>
    </subcellularLocation>
</comment>
<comment type="domain">
    <text evidence="1">The central region was initially thought to constitute a DED (death effector) domain. However, 3D-structure data reveal a previously uncharacterized fold that is different from the predicted fold of a DED (death effector) domain. It consists of a large, hydrophobic central cavity that is poised for cofactor binding (By similarity).</text>
</comment>
<comment type="PTM">
    <text evidence="2">Ubiquitinated in a BTRC-depdent manner; leading to degradation mediated through the proteasome pathway.</text>
</comment>
<comment type="similarity">
    <text evidence="4">Belongs to the TNFAIP8 family. TNFAIP8L2 subfamily.</text>
</comment>
<reference key="1">
    <citation type="submission" date="2008-12" db="EMBL/GenBank/DDBJ databases">
        <title>NISC comparative sequencing initiative.</title>
        <authorList>
            <person name="Antonellis A."/>
            <person name="Ayele K."/>
            <person name="Benjamin B."/>
            <person name="Blakesley R.W."/>
            <person name="Boakye A."/>
            <person name="Bouffard G.G."/>
            <person name="Brinkley C."/>
            <person name="Brooks S."/>
            <person name="Chu G."/>
            <person name="Coleman H."/>
            <person name="Engle J."/>
            <person name="Gestole M."/>
            <person name="Greene A."/>
            <person name="Guan X."/>
            <person name="Gupta J."/>
            <person name="Haghighi P."/>
            <person name="Han J."/>
            <person name="Hansen N."/>
            <person name="Ho S.-L."/>
            <person name="Hu P."/>
            <person name="Hunter G."/>
            <person name="Hurle B."/>
            <person name="Idol J.R."/>
            <person name="Kwong P."/>
            <person name="Laric P."/>
            <person name="Larson S."/>
            <person name="Lee-Lin S.-Q."/>
            <person name="Legaspi R."/>
            <person name="Madden M."/>
            <person name="Maduro Q.L."/>
            <person name="Maduro V.B."/>
            <person name="Margulies E.H."/>
            <person name="Masiello C."/>
            <person name="Maskeri B."/>
            <person name="McDowell J."/>
            <person name="Mojidi H.A."/>
            <person name="Mullikin J.C."/>
            <person name="Oestreicher J.S."/>
            <person name="Park M."/>
            <person name="Portnoy M.E."/>
            <person name="Prasad A."/>
            <person name="Puri O."/>
            <person name="Reddix-Dugue N."/>
            <person name="Schandler K."/>
            <person name="Schueler M.G."/>
            <person name="Sison C."/>
            <person name="Stantripop S."/>
            <person name="Stephen E."/>
            <person name="Taye A."/>
            <person name="Thomas J.W."/>
            <person name="Thomas P.J."/>
            <person name="Tsipouri V."/>
            <person name="Ung L."/>
            <person name="Vogt J.L."/>
            <person name="Wetherby K.D."/>
            <person name="Young A."/>
            <person name="Green E.D."/>
        </authorList>
    </citation>
    <scope>NUCLEOTIDE SEQUENCE [LARGE SCALE GENOMIC DNA]</scope>
</reference>
<evidence type="ECO:0000250" key="1"/>
<evidence type="ECO:0000250" key="2">
    <source>
        <dbReference type="UniProtKB" id="Q6P589"/>
    </source>
</evidence>
<evidence type="ECO:0000250" key="3">
    <source>
        <dbReference type="UniProtKB" id="Q9D8Y7"/>
    </source>
</evidence>
<evidence type="ECO:0000305" key="4"/>
<accession>B2KI57</accession>
<name>TP8L2_RHIFE</name>
<gene>
    <name type="primary">TNFAIP8L2</name>
</gene>
<organism>
    <name type="scientific">Rhinolophus ferrumequinum</name>
    <name type="common">Greater horseshoe bat</name>
    <dbReference type="NCBI Taxonomy" id="59479"/>
    <lineage>
        <taxon>Eukaryota</taxon>
        <taxon>Metazoa</taxon>
        <taxon>Chordata</taxon>
        <taxon>Craniata</taxon>
        <taxon>Vertebrata</taxon>
        <taxon>Euteleostomi</taxon>
        <taxon>Mammalia</taxon>
        <taxon>Eutheria</taxon>
        <taxon>Laurasiatheria</taxon>
        <taxon>Chiroptera</taxon>
        <taxon>Yinpterochiroptera</taxon>
        <taxon>Rhinolophoidea</taxon>
        <taxon>Rhinolophidae</taxon>
        <taxon>Rhinolophinae</taxon>
        <taxon>Rhinolophus</taxon>
    </lineage>
</organism>
<feature type="chain" id="PRO_0000369396" description="Tumor necrosis factor alpha-induced protein 8-like protein 2">
    <location>
        <begin position="1"/>
        <end position="184"/>
    </location>
</feature>